<gene>
    <name evidence="1" type="primary">pepA</name>
    <name type="ordered locus">COSY_0207</name>
</gene>
<proteinExistence type="inferred from homology"/>
<keyword id="KW-0031">Aminopeptidase</keyword>
<keyword id="KW-0963">Cytoplasm</keyword>
<keyword id="KW-0378">Hydrolase</keyword>
<keyword id="KW-0464">Manganese</keyword>
<keyword id="KW-0479">Metal-binding</keyword>
<keyword id="KW-0645">Protease</keyword>
<keyword id="KW-1185">Reference proteome</keyword>
<organism>
    <name type="scientific">Vesicomyosocius okutanii subsp. Calyptogena okutanii (strain HA)</name>
    <dbReference type="NCBI Taxonomy" id="412965"/>
    <lineage>
        <taxon>Bacteria</taxon>
        <taxon>Pseudomonadati</taxon>
        <taxon>Pseudomonadota</taxon>
        <taxon>Gammaproteobacteria</taxon>
        <taxon>Candidatus Pseudothioglobaceae</taxon>
        <taxon>Candidatus Vesicomyosocius</taxon>
    </lineage>
</organism>
<comment type="function">
    <text evidence="1">Presumably involved in the processing and regular turnover of intracellular proteins. Catalyzes the removal of unsubstituted N-terminal amino acids from various peptides.</text>
</comment>
<comment type="catalytic activity">
    <reaction evidence="1">
        <text>Release of an N-terminal amino acid, Xaa-|-Yaa-, in which Xaa is preferably Leu, but may be other amino acids including Pro although not Arg or Lys, and Yaa may be Pro. Amino acid amides and methyl esters are also readily hydrolyzed, but rates on arylamides are exceedingly low.</text>
        <dbReference type="EC" id="3.4.11.1"/>
    </reaction>
</comment>
<comment type="catalytic activity">
    <reaction evidence="1">
        <text>Release of an N-terminal amino acid, preferentially leucine, but not glutamic or aspartic acids.</text>
        <dbReference type="EC" id="3.4.11.10"/>
    </reaction>
</comment>
<comment type="cofactor">
    <cofactor evidence="1">
        <name>Mn(2+)</name>
        <dbReference type="ChEBI" id="CHEBI:29035"/>
    </cofactor>
    <text evidence="1">Binds 2 manganese ions per subunit.</text>
</comment>
<comment type="subcellular location">
    <subcellularLocation>
        <location evidence="1">Cytoplasm</location>
    </subcellularLocation>
</comment>
<comment type="similarity">
    <text evidence="1">Belongs to the peptidase M17 family.</text>
</comment>
<dbReference type="EC" id="3.4.11.1" evidence="1"/>
<dbReference type="EC" id="3.4.11.10" evidence="1"/>
<dbReference type="EMBL" id="AP009247">
    <property type="protein sequence ID" value="BAF61337.1"/>
    <property type="molecule type" value="Genomic_DNA"/>
</dbReference>
<dbReference type="RefSeq" id="WP_011929607.1">
    <property type="nucleotide sequence ID" value="NC_009465.1"/>
</dbReference>
<dbReference type="SMR" id="A5CXK2"/>
<dbReference type="STRING" id="412965.COSY_0207"/>
<dbReference type="MEROPS" id="M17.003"/>
<dbReference type="KEGG" id="vok:COSY_0207"/>
<dbReference type="eggNOG" id="COG0260">
    <property type="taxonomic scope" value="Bacteria"/>
</dbReference>
<dbReference type="HOGENOM" id="CLU_013734_6_3_6"/>
<dbReference type="OrthoDB" id="9809354at2"/>
<dbReference type="Proteomes" id="UP000000247">
    <property type="component" value="Chromosome"/>
</dbReference>
<dbReference type="GO" id="GO:0005737">
    <property type="term" value="C:cytoplasm"/>
    <property type="evidence" value="ECO:0007669"/>
    <property type="project" value="UniProtKB-SubCell"/>
</dbReference>
<dbReference type="GO" id="GO:0030145">
    <property type="term" value="F:manganese ion binding"/>
    <property type="evidence" value="ECO:0007669"/>
    <property type="project" value="UniProtKB-UniRule"/>
</dbReference>
<dbReference type="GO" id="GO:0070006">
    <property type="term" value="F:metalloaminopeptidase activity"/>
    <property type="evidence" value="ECO:0007669"/>
    <property type="project" value="InterPro"/>
</dbReference>
<dbReference type="GO" id="GO:0006508">
    <property type="term" value="P:proteolysis"/>
    <property type="evidence" value="ECO:0007669"/>
    <property type="project" value="UniProtKB-KW"/>
</dbReference>
<dbReference type="CDD" id="cd00433">
    <property type="entry name" value="Peptidase_M17"/>
    <property type="match status" value="1"/>
</dbReference>
<dbReference type="Gene3D" id="3.40.220.10">
    <property type="entry name" value="Leucine Aminopeptidase, subunit E, domain 1"/>
    <property type="match status" value="1"/>
</dbReference>
<dbReference type="Gene3D" id="3.40.630.10">
    <property type="entry name" value="Zn peptidases"/>
    <property type="match status" value="1"/>
</dbReference>
<dbReference type="HAMAP" id="MF_00181">
    <property type="entry name" value="Cytosol_peptidase_M17"/>
    <property type="match status" value="1"/>
</dbReference>
<dbReference type="InterPro" id="IPR011356">
    <property type="entry name" value="Leucine_aapep/pepB"/>
</dbReference>
<dbReference type="InterPro" id="IPR043472">
    <property type="entry name" value="Macro_dom-like"/>
</dbReference>
<dbReference type="InterPro" id="IPR000819">
    <property type="entry name" value="Peptidase_M17_C"/>
</dbReference>
<dbReference type="InterPro" id="IPR023042">
    <property type="entry name" value="Peptidase_M17_leu_NH2_pept"/>
</dbReference>
<dbReference type="InterPro" id="IPR008283">
    <property type="entry name" value="Peptidase_M17_N"/>
</dbReference>
<dbReference type="NCBIfam" id="NF002074">
    <property type="entry name" value="PRK00913.1-4"/>
    <property type="match status" value="1"/>
</dbReference>
<dbReference type="PANTHER" id="PTHR11963:SF23">
    <property type="entry name" value="CYTOSOL AMINOPEPTIDASE"/>
    <property type="match status" value="1"/>
</dbReference>
<dbReference type="PANTHER" id="PTHR11963">
    <property type="entry name" value="LEUCINE AMINOPEPTIDASE-RELATED"/>
    <property type="match status" value="1"/>
</dbReference>
<dbReference type="Pfam" id="PF00883">
    <property type="entry name" value="Peptidase_M17"/>
    <property type="match status" value="1"/>
</dbReference>
<dbReference type="Pfam" id="PF02789">
    <property type="entry name" value="Peptidase_M17_N"/>
    <property type="match status" value="1"/>
</dbReference>
<dbReference type="PRINTS" id="PR00481">
    <property type="entry name" value="LAMNOPPTDASE"/>
</dbReference>
<dbReference type="SUPFAM" id="SSF52949">
    <property type="entry name" value="Macro domain-like"/>
    <property type="match status" value="1"/>
</dbReference>
<dbReference type="SUPFAM" id="SSF53187">
    <property type="entry name" value="Zn-dependent exopeptidases"/>
    <property type="match status" value="1"/>
</dbReference>
<dbReference type="PROSITE" id="PS00631">
    <property type="entry name" value="CYTOSOL_AP"/>
    <property type="match status" value="1"/>
</dbReference>
<reference key="1">
    <citation type="journal article" date="2007" name="Curr. Biol.">
        <title>Reduced genome of the thioautotrophic intracellular symbiont in a deep-sea clam, Calyptogena okutanii.</title>
        <authorList>
            <person name="Kuwahara H."/>
            <person name="Yoshida T."/>
            <person name="Takaki Y."/>
            <person name="Shimamura S."/>
            <person name="Nishi S."/>
            <person name="Harada M."/>
            <person name="Matsuyama K."/>
            <person name="Takishita K."/>
            <person name="Kawato M."/>
            <person name="Uematsu K."/>
            <person name="Fujiwara Y."/>
            <person name="Sato T."/>
            <person name="Kato C."/>
            <person name="Kitagawa M."/>
            <person name="Kato I."/>
            <person name="Maruyama T."/>
        </authorList>
    </citation>
    <scope>NUCLEOTIDE SEQUENCE [LARGE SCALE GENOMIC DNA]</scope>
    <source>
        <strain>HA</strain>
    </source>
</reference>
<protein>
    <recommendedName>
        <fullName evidence="1">Probable cytosol aminopeptidase</fullName>
        <ecNumber evidence="1">3.4.11.1</ecNumber>
    </recommendedName>
    <alternativeName>
        <fullName evidence="1">Leucine aminopeptidase</fullName>
        <shortName evidence="1">LAP</shortName>
        <ecNumber evidence="1">3.4.11.10</ecNumber>
    </alternativeName>
    <alternativeName>
        <fullName evidence="1">Leucyl aminopeptidase</fullName>
    </alternativeName>
</protein>
<sequence>MKFTLINEIIQHFKGDAVVVFSNSNTVFNDDNIQQLIKLNHFDSKPGKVLLLNLVSGFKSKQVIVSGLGDAPISAKNYVKALNAVIVILVEIKAKNLMVQHVGIKGFNELWVHEITAKVMCNATYKVQKVGNYKKQNSGIERITIQSTMDSVYGLMKGQAIADGMSLTRHLGDLPSNVCTPSYLAGTAISLAQEFNLECEVLEEVDMEKLGMGSLLAVSKGSSEPPKLISLSYRGNGNEKPIVLVGKGVTFDSGGISLKPGTGMDEMKYDMCGAASVLGVMRVIAQIKPNINLVVVLPAVENMPAHNASKPGDVVKSMSGKTIEILNTDAEGRLILCDALTYVKKFNPEVVIDIATLTGAVVVALGKYNSGLMSNDKNLANDIISASKVSLDGVWQLPIEDEYDELLQSNFADMANIGGSSEAGSITAGCFLSRFTQGYRWAHLDIAGTAWVSGDKKGATGRPVSLLTQFIMDQVQKRL</sequence>
<name>AMPA_VESOH</name>
<accession>A5CXK2</accession>
<feature type="chain" id="PRO_1000098357" description="Probable cytosol aminopeptidase">
    <location>
        <begin position="1"/>
        <end position="479"/>
    </location>
</feature>
<feature type="active site" evidence="1">
    <location>
        <position position="259"/>
    </location>
</feature>
<feature type="active site" evidence="1">
    <location>
        <position position="333"/>
    </location>
</feature>
<feature type="binding site" evidence="1">
    <location>
        <position position="247"/>
    </location>
    <ligand>
        <name>Mn(2+)</name>
        <dbReference type="ChEBI" id="CHEBI:29035"/>
        <label>2</label>
    </ligand>
</feature>
<feature type="binding site" evidence="1">
    <location>
        <position position="252"/>
    </location>
    <ligand>
        <name>Mn(2+)</name>
        <dbReference type="ChEBI" id="CHEBI:29035"/>
        <label>1</label>
    </ligand>
</feature>
<feature type="binding site" evidence="1">
    <location>
        <position position="252"/>
    </location>
    <ligand>
        <name>Mn(2+)</name>
        <dbReference type="ChEBI" id="CHEBI:29035"/>
        <label>2</label>
    </ligand>
</feature>
<feature type="binding site" evidence="1">
    <location>
        <position position="270"/>
    </location>
    <ligand>
        <name>Mn(2+)</name>
        <dbReference type="ChEBI" id="CHEBI:29035"/>
        <label>2</label>
    </ligand>
</feature>
<feature type="binding site" evidence="1">
    <location>
        <position position="329"/>
    </location>
    <ligand>
        <name>Mn(2+)</name>
        <dbReference type="ChEBI" id="CHEBI:29035"/>
        <label>1</label>
    </ligand>
</feature>
<feature type="binding site" evidence="1">
    <location>
        <position position="331"/>
    </location>
    <ligand>
        <name>Mn(2+)</name>
        <dbReference type="ChEBI" id="CHEBI:29035"/>
        <label>1</label>
    </ligand>
</feature>
<feature type="binding site" evidence="1">
    <location>
        <position position="331"/>
    </location>
    <ligand>
        <name>Mn(2+)</name>
        <dbReference type="ChEBI" id="CHEBI:29035"/>
        <label>2</label>
    </ligand>
</feature>
<evidence type="ECO:0000255" key="1">
    <source>
        <dbReference type="HAMAP-Rule" id="MF_00181"/>
    </source>
</evidence>